<organism>
    <name type="scientific">Arabidopsis thaliana</name>
    <name type="common">Mouse-ear cress</name>
    <dbReference type="NCBI Taxonomy" id="3702"/>
    <lineage>
        <taxon>Eukaryota</taxon>
        <taxon>Viridiplantae</taxon>
        <taxon>Streptophyta</taxon>
        <taxon>Embryophyta</taxon>
        <taxon>Tracheophyta</taxon>
        <taxon>Spermatophyta</taxon>
        <taxon>Magnoliopsida</taxon>
        <taxon>eudicotyledons</taxon>
        <taxon>Gunneridae</taxon>
        <taxon>Pentapetalae</taxon>
        <taxon>rosids</taxon>
        <taxon>malvids</taxon>
        <taxon>Brassicales</taxon>
        <taxon>Brassicaceae</taxon>
        <taxon>Camelineae</taxon>
        <taxon>Arabidopsis</taxon>
    </lineage>
</organism>
<comment type="function">
    <text evidence="3 4">PUMPS are mitochondrial transporter proteins that create proton leaks across the inner mitochondrial membrane, thus uncoupling oxidative phosphorylation. This leads to a decrease in the efficiency of oxidative phosphorylation and an increase in heat production. May be involved in protecting plant cells against oxidative stress damage. Recombinant PUMP5, reconstituted into liposomes, transports a wide range of dicarboxylic acids including malate, oxaloacetate and succinate as well as phosphate, sulfate and thiosulfate. However, it is unknown if these transports are of any biological significance in vivo.</text>
</comment>
<comment type="subcellular location">
    <subcellularLocation>
        <location evidence="1">Mitochondrion inner membrane</location>
        <topology evidence="1">Multi-pass membrane protein</topology>
    </subcellularLocation>
</comment>
<comment type="tissue specificity">
    <text evidence="3 4">Expressed in roots, leaves, stems and flowers.</text>
</comment>
<comment type="induction">
    <text evidence="3 5">By cold stress and high light.</text>
</comment>
<comment type="similarity">
    <text evidence="6">Belongs to the mitochondrial carrier (TC 2.A.29) family.</text>
</comment>
<comment type="sequence caution" evidence="6">
    <conflict type="frameshift">
        <sequence resource="EMBL-CDS" id="BAF02125"/>
    </conflict>
</comment>
<proteinExistence type="evidence at transcript level"/>
<protein>
    <recommendedName>
        <fullName>Mitochondrial uncoupling protein 5</fullName>
        <shortName>AtPUMP5</shortName>
    </recommendedName>
    <alternativeName>
        <fullName>Mitochondrial dicarboxylate carrier 1</fullName>
    </alternativeName>
</protein>
<evidence type="ECO:0000250" key="1"/>
<evidence type="ECO:0000255" key="2"/>
<evidence type="ECO:0000269" key="3">
    <source>
    </source>
</evidence>
<evidence type="ECO:0000269" key="4">
    <source>
    </source>
</evidence>
<evidence type="ECO:0000269" key="5">
    <source>
    </source>
</evidence>
<evidence type="ECO:0000305" key="6"/>
<accession>Q9SJY5</accession>
<accession>Q0WL82</accession>
<accession>Q94K32</accession>
<name>PUMP5_ARATH</name>
<gene>
    <name type="primary">PUMP5</name>
    <name type="synonym">DIC1</name>
    <name type="synonym">UCP5</name>
    <name type="ordered locus">At2g22500</name>
    <name type="ORF">F14M13.10</name>
</gene>
<keyword id="KW-0472">Membrane</keyword>
<keyword id="KW-0496">Mitochondrion</keyword>
<keyword id="KW-0999">Mitochondrion inner membrane</keyword>
<keyword id="KW-1185">Reference proteome</keyword>
<keyword id="KW-0677">Repeat</keyword>
<keyword id="KW-0346">Stress response</keyword>
<keyword id="KW-0812">Transmembrane</keyword>
<keyword id="KW-1133">Transmembrane helix</keyword>
<keyword id="KW-0813">Transport</keyword>
<reference key="1">
    <citation type="journal article" date="2008" name="Biochem. J.">
        <title>Molecular identification of three Arabidopsis thaliana mitochondrial dicarboxylate carrier isoforms: organ distribution, bacterial expression, reconstitution into liposomes and functional characterization.</title>
        <authorList>
            <person name="Palmieri L."/>
            <person name="Picault N."/>
            <person name="Arrigoni R."/>
            <person name="Besin E."/>
            <person name="Palmieri F."/>
            <person name="Hodges M."/>
        </authorList>
    </citation>
    <scope>NUCLEOTIDE SEQUENCE [MRNA]</scope>
    <scope>FUNCTION</scope>
    <scope>TISSUE SPECIFICITY</scope>
    <source>
        <strain>cv. Columbia</strain>
        <tissue>Root</tissue>
    </source>
</reference>
<reference key="2">
    <citation type="journal article" date="1999" name="Nature">
        <title>Sequence and analysis of chromosome 2 of the plant Arabidopsis thaliana.</title>
        <authorList>
            <person name="Lin X."/>
            <person name="Kaul S."/>
            <person name="Rounsley S.D."/>
            <person name="Shea T.P."/>
            <person name="Benito M.-I."/>
            <person name="Town C.D."/>
            <person name="Fujii C.Y."/>
            <person name="Mason T.M."/>
            <person name="Bowman C.L."/>
            <person name="Barnstead M.E."/>
            <person name="Feldblyum T.V."/>
            <person name="Buell C.R."/>
            <person name="Ketchum K.A."/>
            <person name="Lee J.J."/>
            <person name="Ronning C.M."/>
            <person name="Koo H.L."/>
            <person name="Moffat K.S."/>
            <person name="Cronin L.A."/>
            <person name="Shen M."/>
            <person name="Pai G."/>
            <person name="Van Aken S."/>
            <person name="Umayam L."/>
            <person name="Tallon L.J."/>
            <person name="Gill J.E."/>
            <person name="Adams M.D."/>
            <person name="Carrera A.J."/>
            <person name="Creasy T.H."/>
            <person name="Goodman H.M."/>
            <person name="Somerville C.R."/>
            <person name="Copenhaver G.P."/>
            <person name="Preuss D."/>
            <person name="Nierman W.C."/>
            <person name="White O."/>
            <person name="Eisen J.A."/>
            <person name="Salzberg S.L."/>
            <person name="Fraser C.M."/>
            <person name="Venter J.C."/>
        </authorList>
    </citation>
    <scope>NUCLEOTIDE SEQUENCE [LARGE SCALE GENOMIC DNA]</scope>
    <source>
        <strain>cv. Columbia</strain>
    </source>
</reference>
<reference key="3">
    <citation type="journal article" date="2017" name="Plant J.">
        <title>Araport11: a complete reannotation of the Arabidopsis thaliana reference genome.</title>
        <authorList>
            <person name="Cheng C.Y."/>
            <person name="Krishnakumar V."/>
            <person name="Chan A.P."/>
            <person name="Thibaud-Nissen F."/>
            <person name="Schobel S."/>
            <person name="Town C.D."/>
        </authorList>
    </citation>
    <scope>GENOME REANNOTATION</scope>
    <source>
        <strain>cv. Columbia</strain>
    </source>
</reference>
<reference key="4">
    <citation type="journal article" date="2003" name="Science">
        <title>Empirical analysis of transcriptional activity in the Arabidopsis genome.</title>
        <authorList>
            <person name="Yamada K."/>
            <person name="Lim J."/>
            <person name="Dale J.M."/>
            <person name="Chen H."/>
            <person name="Shinn P."/>
            <person name="Palm C.J."/>
            <person name="Southwick A.M."/>
            <person name="Wu H.C."/>
            <person name="Kim C.J."/>
            <person name="Nguyen M."/>
            <person name="Pham P.K."/>
            <person name="Cheuk R.F."/>
            <person name="Karlin-Newmann G."/>
            <person name="Liu S.X."/>
            <person name="Lam B."/>
            <person name="Sakano H."/>
            <person name="Wu T."/>
            <person name="Yu G."/>
            <person name="Miranda M."/>
            <person name="Quach H.L."/>
            <person name="Tripp M."/>
            <person name="Chang C.H."/>
            <person name="Lee J.M."/>
            <person name="Toriumi M.J."/>
            <person name="Chan M.M."/>
            <person name="Tang C.C."/>
            <person name="Onodera C.S."/>
            <person name="Deng J.M."/>
            <person name="Akiyama K."/>
            <person name="Ansari Y."/>
            <person name="Arakawa T."/>
            <person name="Banh J."/>
            <person name="Banno F."/>
            <person name="Bowser L."/>
            <person name="Brooks S.Y."/>
            <person name="Carninci P."/>
            <person name="Chao Q."/>
            <person name="Choy N."/>
            <person name="Enju A."/>
            <person name="Goldsmith A.D."/>
            <person name="Gurjal M."/>
            <person name="Hansen N.F."/>
            <person name="Hayashizaki Y."/>
            <person name="Johnson-Hopson C."/>
            <person name="Hsuan V.W."/>
            <person name="Iida K."/>
            <person name="Karnes M."/>
            <person name="Khan S."/>
            <person name="Koesema E."/>
            <person name="Ishida J."/>
            <person name="Jiang P.X."/>
            <person name="Jones T."/>
            <person name="Kawai J."/>
            <person name="Kamiya A."/>
            <person name="Meyers C."/>
            <person name="Nakajima M."/>
            <person name="Narusaka M."/>
            <person name="Seki M."/>
            <person name="Sakurai T."/>
            <person name="Satou M."/>
            <person name="Tamse R."/>
            <person name="Vaysberg M."/>
            <person name="Wallender E.K."/>
            <person name="Wong C."/>
            <person name="Yamamura Y."/>
            <person name="Yuan S."/>
            <person name="Shinozaki K."/>
            <person name="Davis R.W."/>
            <person name="Theologis A."/>
            <person name="Ecker J.R."/>
        </authorList>
    </citation>
    <scope>NUCLEOTIDE SEQUENCE [LARGE SCALE MRNA]</scope>
    <source>
        <strain>cv. Columbia</strain>
    </source>
</reference>
<reference key="5">
    <citation type="submission" date="2006-07" db="EMBL/GenBank/DDBJ databases">
        <title>Large-scale analysis of RIKEN Arabidopsis full-length (RAFL) cDNAs.</title>
        <authorList>
            <person name="Totoki Y."/>
            <person name="Seki M."/>
            <person name="Ishida J."/>
            <person name="Nakajima M."/>
            <person name="Enju A."/>
            <person name="Kamiya A."/>
            <person name="Narusaka M."/>
            <person name="Shin-i T."/>
            <person name="Nakagawa M."/>
            <person name="Sakamoto N."/>
            <person name="Oishi K."/>
            <person name="Kohara Y."/>
            <person name="Kobayashi M."/>
            <person name="Toyoda A."/>
            <person name="Sakaki Y."/>
            <person name="Sakurai T."/>
            <person name="Iida K."/>
            <person name="Akiyama K."/>
            <person name="Satou M."/>
            <person name="Toyoda T."/>
            <person name="Konagaya A."/>
            <person name="Carninci P."/>
            <person name="Kawai J."/>
            <person name="Hayashizaki Y."/>
            <person name="Shinozaki K."/>
        </authorList>
    </citation>
    <scope>NUCLEOTIDE SEQUENCE [LARGE SCALE MRNA]</scope>
    <source>
        <strain>cv. Columbia</strain>
    </source>
</reference>
<reference key="6">
    <citation type="journal article" date="2006" name="J. Exp. Bot.">
        <title>The plant energy-dissipating mitochondrial systems: depicting the genomic structure and the expression profiles of the gene families of uncoupling protein and alternative oxidase in monocots and dicots.</title>
        <authorList>
            <person name="Borecky J."/>
            <person name="Nogueira F.T."/>
            <person name="de Oliveira K.A."/>
            <person name="Maia I.G."/>
            <person name="Vercesi A.E."/>
            <person name="Arruda P."/>
        </authorList>
    </citation>
    <scope>FUNCTION</scope>
    <scope>TISSUE SPECIFICITY</scope>
    <scope>INDUCTION BY COLD</scope>
    <scope>GENE FAMILY</scope>
    <scope>NOMENCLATURE</scope>
</reference>
<reference key="7">
    <citation type="journal article" date="2009" name="Plant Cell Physiol.">
        <title>Differential gene expression profiles of the mitochondrial respiratory components in illuminated Arabidopsis leaves.</title>
        <authorList>
            <person name="Yoshida K."/>
            <person name="Noguchi K."/>
        </authorList>
    </citation>
    <scope>INDUCTION BY HIGH LIGHT</scope>
</reference>
<feature type="chain" id="PRO_0000420259" description="Mitochondrial uncoupling protein 5">
    <location>
        <begin position="1"/>
        <end position="313"/>
    </location>
</feature>
<feature type="transmembrane region" description="Helical; Name=1" evidence="2">
    <location>
        <begin position="6"/>
        <end position="26"/>
    </location>
</feature>
<feature type="transmembrane region" description="Helical; Name=2" evidence="2">
    <location>
        <begin position="77"/>
        <end position="97"/>
    </location>
</feature>
<feature type="transmembrane region" description="Helical; Name=3" evidence="2">
    <location>
        <begin position="123"/>
        <end position="143"/>
    </location>
</feature>
<feature type="transmembrane region" description="Helical; Name=4" evidence="2">
    <location>
        <begin position="182"/>
        <end position="202"/>
    </location>
</feature>
<feature type="transmembrane region" description="Helical; Name=5" evidence="2">
    <location>
        <begin position="223"/>
        <end position="243"/>
    </location>
</feature>
<feature type="transmembrane region" description="Helical; Name=6" evidence="2">
    <location>
        <begin position="280"/>
        <end position="300"/>
    </location>
</feature>
<feature type="repeat" description="Solcar 1">
    <location>
        <begin position="4"/>
        <end position="108"/>
    </location>
</feature>
<feature type="repeat" description="Solcar 2">
    <location>
        <begin position="117"/>
        <end position="208"/>
    </location>
</feature>
<feature type="repeat" description="Solcar 3">
    <location>
        <begin position="217"/>
        <end position="307"/>
    </location>
</feature>
<feature type="sequence conflict" description="In Ref. 4; AAK44155." evidence="6" ref="4">
    <original>G</original>
    <variation>V</variation>
    <location>
        <position position="130"/>
    </location>
</feature>
<sequence>MGLKGFAEGGIASIVAGCSTHPLDLIKVRMQLQGESAPIQTNLRPALAFQTSTTVNAPPLRVGVIGVGSRLIREEGMRALFSGVSATVLRQTLYSTTRMGLYDIIKGEWTDPETKTMPLMKKIGAGAIAGAIGAAVGNPADVAMVRMQADGRLPLTDRRNYKSVLDAITQMIRGEGVTSLWRGSSLTINRAMLVTSSQLASYDSVKETILEKGLLKDGLGTHVSASFAAGFVASVASNPVDVIKTRVMNMKVVAGVAPPYKGAVDCALKTVKAEGIMSLYKGFIPTVSRQAPFTVVLFVTLEQVKKLFKDYDF</sequence>
<dbReference type="EMBL" id="AM236862">
    <property type="protein sequence ID" value="CAJ86454.1"/>
    <property type="molecule type" value="mRNA"/>
</dbReference>
<dbReference type="EMBL" id="AC006592">
    <property type="protein sequence ID" value="AAD22351.1"/>
    <property type="molecule type" value="Genomic_DNA"/>
</dbReference>
<dbReference type="EMBL" id="CP002685">
    <property type="protein sequence ID" value="AEC07315.1"/>
    <property type="molecule type" value="Genomic_DNA"/>
</dbReference>
<dbReference type="EMBL" id="AF370340">
    <property type="protein sequence ID" value="AAK44155.1"/>
    <property type="molecule type" value="mRNA"/>
</dbReference>
<dbReference type="EMBL" id="AF370588">
    <property type="protein sequence ID" value="AAK43907.1"/>
    <property type="molecule type" value="mRNA"/>
</dbReference>
<dbReference type="EMBL" id="AY142648">
    <property type="protein sequence ID" value="AAN13106.1"/>
    <property type="molecule type" value="mRNA"/>
</dbReference>
<dbReference type="EMBL" id="AK230325">
    <property type="protein sequence ID" value="BAF02125.1"/>
    <property type="status" value="ALT_FRAME"/>
    <property type="molecule type" value="mRNA"/>
</dbReference>
<dbReference type="PIR" id="D84613">
    <property type="entry name" value="D84613"/>
</dbReference>
<dbReference type="RefSeq" id="NP_179836.1">
    <property type="nucleotide sequence ID" value="NM_127816.3"/>
</dbReference>
<dbReference type="SMR" id="Q9SJY5"/>
<dbReference type="FunCoup" id="Q9SJY5">
    <property type="interactions" value="843"/>
</dbReference>
<dbReference type="STRING" id="3702.Q9SJY5"/>
<dbReference type="TCDB" id="2.A.29.2.9">
    <property type="family name" value="the mitochondrial carrier (mc) family"/>
</dbReference>
<dbReference type="PaxDb" id="3702-AT2G22500.1"/>
<dbReference type="ProteomicsDB" id="226268"/>
<dbReference type="EnsemblPlants" id="AT2G22500.1">
    <property type="protein sequence ID" value="AT2G22500.1"/>
    <property type="gene ID" value="AT2G22500"/>
</dbReference>
<dbReference type="GeneID" id="816783"/>
<dbReference type="Gramene" id="AT2G22500.1">
    <property type="protein sequence ID" value="AT2G22500.1"/>
    <property type="gene ID" value="AT2G22500"/>
</dbReference>
<dbReference type="KEGG" id="ath:AT2G22500"/>
<dbReference type="Araport" id="AT2G22500"/>
<dbReference type="TAIR" id="AT2G22500">
    <property type="gene designation" value="UCP5"/>
</dbReference>
<dbReference type="eggNOG" id="KOG0759">
    <property type="taxonomic scope" value="Eukaryota"/>
</dbReference>
<dbReference type="HOGENOM" id="CLU_015166_14_1_1"/>
<dbReference type="InParanoid" id="Q9SJY5"/>
<dbReference type="OMA" id="PTHMKFV"/>
<dbReference type="OrthoDB" id="6703404at2759"/>
<dbReference type="PhylomeDB" id="Q9SJY5"/>
<dbReference type="PRO" id="PR:Q9SJY5"/>
<dbReference type="Proteomes" id="UP000006548">
    <property type="component" value="Chromosome 2"/>
</dbReference>
<dbReference type="ExpressionAtlas" id="Q9SJY5">
    <property type="expression patterns" value="baseline and differential"/>
</dbReference>
<dbReference type="GO" id="GO:0005743">
    <property type="term" value="C:mitochondrial inner membrane"/>
    <property type="evidence" value="ECO:0007669"/>
    <property type="project" value="UniProtKB-SubCell"/>
</dbReference>
<dbReference type="GO" id="GO:0005310">
    <property type="term" value="F:dicarboxylic acid transmembrane transporter activity"/>
    <property type="evidence" value="ECO:0000314"/>
    <property type="project" value="TAIR"/>
</dbReference>
<dbReference type="GO" id="GO:0017077">
    <property type="term" value="F:oxidative phosphorylation uncoupler activity"/>
    <property type="evidence" value="ECO:0000314"/>
    <property type="project" value="UniProtKB"/>
</dbReference>
<dbReference type="GO" id="GO:0071456">
    <property type="term" value="P:cellular response to hypoxia"/>
    <property type="evidence" value="ECO:0007007"/>
    <property type="project" value="TAIR"/>
</dbReference>
<dbReference type="GO" id="GO:0006839">
    <property type="term" value="P:mitochondrial transport"/>
    <property type="evidence" value="ECO:0000314"/>
    <property type="project" value="TAIR"/>
</dbReference>
<dbReference type="GO" id="GO:1902600">
    <property type="term" value="P:proton transmembrane transport"/>
    <property type="evidence" value="ECO:0000314"/>
    <property type="project" value="UniProtKB"/>
</dbReference>
<dbReference type="FunFam" id="1.50.40.10:FF:000030">
    <property type="entry name" value="Mitochondrial uncoupling protein 5"/>
    <property type="match status" value="1"/>
</dbReference>
<dbReference type="Gene3D" id="1.50.40.10">
    <property type="entry name" value="Mitochondrial carrier domain"/>
    <property type="match status" value="1"/>
</dbReference>
<dbReference type="InterPro" id="IPR002067">
    <property type="entry name" value="Mit_carrier"/>
</dbReference>
<dbReference type="InterPro" id="IPR050391">
    <property type="entry name" value="Mito_Metabolite_Transporter"/>
</dbReference>
<dbReference type="InterPro" id="IPR018108">
    <property type="entry name" value="Mitochondrial_sb/sol_carrier"/>
</dbReference>
<dbReference type="InterPro" id="IPR023395">
    <property type="entry name" value="Mt_carrier_dom_sf"/>
</dbReference>
<dbReference type="PANTHER" id="PTHR45618">
    <property type="entry name" value="MITOCHONDRIAL DICARBOXYLATE CARRIER-RELATED"/>
    <property type="match status" value="1"/>
</dbReference>
<dbReference type="Pfam" id="PF00153">
    <property type="entry name" value="Mito_carr"/>
    <property type="match status" value="3"/>
</dbReference>
<dbReference type="PRINTS" id="PR00784">
    <property type="entry name" value="MTUNCOUPLING"/>
</dbReference>
<dbReference type="SUPFAM" id="SSF103506">
    <property type="entry name" value="Mitochondrial carrier"/>
    <property type="match status" value="1"/>
</dbReference>
<dbReference type="PROSITE" id="PS50920">
    <property type="entry name" value="SOLCAR"/>
    <property type="match status" value="3"/>
</dbReference>